<evidence type="ECO:0000255" key="1">
    <source>
        <dbReference type="HAMAP-Rule" id="MF_01507"/>
    </source>
</evidence>
<sequence length="88" mass="10373">MGFTEETVRFRLDDTDKQEISKTLTSVYRSLEEKGYNPINQIIGYVLSGDPAYIPRYNDARNQIRKHERDEIIEELVRYYLKGNGIDL</sequence>
<feature type="chain" id="PRO_0000296639" description="UPF0297 protein SSU98_0066">
    <location>
        <begin position="1"/>
        <end position="88"/>
    </location>
</feature>
<protein>
    <recommendedName>
        <fullName evidence="1">UPF0297 protein SSU98_0066</fullName>
    </recommendedName>
</protein>
<proteinExistence type="inferred from homology"/>
<gene>
    <name type="ordered locus">SSU98_0066</name>
</gene>
<name>Y066_STRS2</name>
<accession>A4VYN7</accession>
<dbReference type="EMBL" id="CP000408">
    <property type="protein sequence ID" value="ABP91226.1"/>
    <property type="molecule type" value="Genomic_DNA"/>
</dbReference>
<dbReference type="SMR" id="A4VYN7"/>
<dbReference type="KEGG" id="ssv:SSU98_0066"/>
<dbReference type="HOGENOM" id="CLU_162466_0_0_9"/>
<dbReference type="BioCyc" id="SSUI391296:GI2E-85-MONOMER"/>
<dbReference type="HAMAP" id="MF_01507">
    <property type="entry name" value="UPF0297"/>
    <property type="match status" value="1"/>
</dbReference>
<dbReference type="InterPro" id="IPR009309">
    <property type="entry name" value="IreB"/>
</dbReference>
<dbReference type="NCBIfam" id="NF003997">
    <property type="entry name" value="PRK05473.1"/>
    <property type="match status" value="1"/>
</dbReference>
<dbReference type="PANTHER" id="PTHR40067">
    <property type="entry name" value="UPF0297 PROTEIN YRZL"/>
    <property type="match status" value="1"/>
</dbReference>
<dbReference type="PANTHER" id="PTHR40067:SF1">
    <property type="entry name" value="UPF0297 PROTEIN YRZL"/>
    <property type="match status" value="1"/>
</dbReference>
<dbReference type="Pfam" id="PF06135">
    <property type="entry name" value="IreB"/>
    <property type="match status" value="1"/>
</dbReference>
<dbReference type="PIRSF" id="PIRSF037258">
    <property type="entry name" value="DUF965_bac"/>
    <property type="match status" value="1"/>
</dbReference>
<organism>
    <name type="scientific">Streptococcus suis (strain 98HAH33)</name>
    <dbReference type="NCBI Taxonomy" id="391296"/>
    <lineage>
        <taxon>Bacteria</taxon>
        <taxon>Bacillati</taxon>
        <taxon>Bacillota</taxon>
        <taxon>Bacilli</taxon>
        <taxon>Lactobacillales</taxon>
        <taxon>Streptococcaceae</taxon>
        <taxon>Streptococcus</taxon>
    </lineage>
</organism>
<reference key="1">
    <citation type="journal article" date="2007" name="PLoS ONE">
        <title>A glimpse of streptococcal toxic shock syndrome from comparative genomics of S. suis 2 Chinese isolates.</title>
        <authorList>
            <person name="Chen C."/>
            <person name="Tang J."/>
            <person name="Dong W."/>
            <person name="Wang C."/>
            <person name="Feng Y."/>
            <person name="Wang J."/>
            <person name="Zheng F."/>
            <person name="Pan X."/>
            <person name="Liu D."/>
            <person name="Li M."/>
            <person name="Song Y."/>
            <person name="Zhu X."/>
            <person name="Sun H."/>
            <person name="Feng T."/>
            <person name="Guo Z."/>
            <person name="Ju A."/>
            <person name="Ge J."/>
            <person name="Dong Y."/>
            <person name="Sun W."/>
            <person name="Jiang Y."/>
            <person name="Wang J."/>
            <person name="Yan J."/>
            <person name="Yang H."/>
            <person name="Wang X."/>
            <person name="Gao G.F."/>
            <person name="Yang R."/>
            <person name="Wang J."/>
            <person name="Yu J."/>
        </authorList>
    </citation>
    <scope>NUCLEOTIDE SEQUENCE [LARGE SCALE GENOMIC DNA]</scope>
    <source>
        <strain>98HAH33</strain>
    </source>
</reference>
<comment type="similarity">
    <text evidence="1">Belongs to the UPF0297 family.</text>
</comment>